<evidence type="ECO:0000255" key="1">
    <source>
        <dbReference type="HAMAP-Rule" id="MF_00382"/>
    </source>
</evidence>
<evidence type="ECO:0000305" key="2"/>
<keyword id="KW-0150">Chloroplast</keyword>
<keyword id="KW-0934">Plastid</keyword>
<keyword id="KW-0687">Ribonucleoprotein</keyword>
<keyword id="KW-0689">Ribosomal protein</keyword>
<keyword id="KW-0694">RNA-binding</keyword>
<keyword id="KW-0699">rRNA-binding</keyword>
<proteinExistence type="inferred from homology"/>
<gene>
    <name evidence="1" type="primary">rpl20</name>
</gene>
<feature type="chain" id="PRO_0000355514" description="Large ribosomal subunit protein bL20c">
    <location>
        <begin position="1"/>
        <end position="117"/>
    </location>
</feature>
<organism>
    <name type="scientific">Manihot esculenta</name>
    <name type="common">Cassava</name>
    <name type="synonym">Jatropha manihot</name>
    <dbReference type="NCBI Taxonomy" id="3983"/>
    <lineage>
        <taxon>Eukaryota</taxon>
        <taxon>Viridiplantae</taxon>
        <taxon>Streptophyta</taxon>
        <taxon>Embryophyta</taxon>
        <taxon>Tracheophyta</taxon>
        <taxon>Spermatophyta</taxon>
        <taxon>Magnoliopsida</taxon>
        <taxon>eudicotyledons</taxon>
        <taxon>Gunneridae</taxon>
        <taxon>Pentapetalae</taxon>
        <taxon>rosids</taxon>
        <taxon>fabids</taxon>
        <taxon>Malpighiales</taxon>
        <taxon>Euphorbiaceae</taxon>
        <taxon>Crotonoideae</taxon>
        <taxon>Manihoteae</taxon>
        <taxon>Manihot</taxon>
    </lineage>
</organism>
<protein>
    <recommendedName>
        <fullName evidence="1">Large ribosomal subunit protein bL20c</fullName>
    </recommendedName>
    <alternativeName>
        <fullName evidence="2">50S ribosomal protein L20, chloroplastic</fullName>
    </alternativeName>
</protein>
<accession>B1NWH3</accession>
<name>RK20_MANES</name>
<geneLocation type="chloroplast"/>
<dbReference type="EMBL" id="EU117376">
    <property type="protein sequence ID" value="ABV66177.1"/>
    <property type="molecule type" value="Genomic_DNA"/>
</dbReference>
<dbReference type="RefSeq" id="YP_001718460.1">
    <property type="nucleotide sequence ID" value="NC_010433.1"/>
</dbReference>
<dbReference type="SMR" id="B1NWH3"/>
<dbReference type="GeneID" id="6000024"/>
<dbReference type="KEGG" id="mesc:6000024"/>
<dbReference type="OrthoDB" id="10251781at2759"/>
<dbReference type="GO" id="GO:0009507">
    <property type="term" value="C:chloroplast"/>
    <property type="evidence" value="ECO:0007669"/>
    <property type="project" value="UniProtKB-SubCell"/>
</dbReference>
<dbReference type="GO" id="GO:1990904">
    <property type="term" value="C:ribonucleoprotein complex"/>
    <property type="evidence" value="ECO:0007669"/>
    <property type="project" value="UniProtKB-KW"/>
</dbReference>
<dbReference type="GO" id="GO:0005840">
    <property type="term" value="C:ribosome"/>
    <property type="evidence" value="ECO:0007669"/>
    <property type="project" value="UniProtKB-KW"/>
</dbReference>
<dbReference type="GO" id="GO:0019843">
    <property type="term" value="F:rRNA binding"/>
    <property type="evidence" value="ECO:0007669"/>
    <property type="project" value="UniProtKB-UniRule"/>
</dbReference>
<dbReference type="GO" id="GO:0003735">
    <property type="term" value="F:structural constituent of ribosome"/>
    <property type="evidence" value="ECO:0007669"/>
    <property type="project" value="InterPro"/>
</dbReference>
<dbReference type="GO" id="GO:0000027">
    <property type="term" value="P:ribosomal large subunit assembly"/>
    <property type="evidence" value="ECO:0007669"/>
    <property type="project" value="UniProtKB-UniRule"/>
</dbReference>
<dbReference type="GO" id="GO:0006412">
    <property type="term" value="P:translation"/>
    <property type="evidence" value="ECO:0007669"/>
    <property type="project" value="InterPro"/>
</dbReference>
<dbReference type="CDD" id="cd07026">
    <property type="entry name" value="Ribosomal_L20"/>
    <property type="match status" value="1"/>
</dbReference>
<dbReference type="FunFam" id="1.10.1900.20:FF:000001">
    <property type="entry name" value="50S ribosomal protein L20"/>
    <property type="match status" value="1"/>
</dbReference>
<dbReference type="Gene3D" id="6.10.160.10">
    <property type="match status" value="1"/>
</dbReference>
<dbReference type="Gene3D" id="1.10.1900.20">
    <property type="entry name" value="Ribosomal protein L20"/>
    <property type="match status" value="1"/>
</dbReference>
<dbReference type="HAMAP" id="MF_00382">
    <property type="entry name" value="Ribosomal_bL20"/>
    <property type="match status" value="1"/>
</dbReference>
<dbReference type="InterPro" id="IPR005813">
    <property type="entry name" value="Ribosomal_bL20"/>
</dbReference>
<dbReference type="InterPro" id="IPR049946">
    <property type="entry name" value="RIBOSOMAL_L20_CS"/>
</dbReference>
<dbReference type="InterPro" id="IPR035566">
    <property type="entry name" value="Ribosomal_protein_bL20_C"/>
</dbReference>
<dbReference type="NCBIfam" id="TIGR01032">
    <property type="entry name" value="rplT_bact"/>
    <property type="match status" value="1"/>
</dbReference>
<dbReference type="PANTHER" id="PTHR10986">
    <property type="entry name" value="39S RIBOSOMAL PROTEIN L20"/>
    <property type="match status" value="1"/>
</dbReference>
<dbReference type="Pfam" id="PF00453">
    <property type="entry name" value="Ribosomal_L20"/>
    <property type="match status" value="1"/>
</dbReference>
<dbReference type="PRINTS" id="PR00062">
    <property type="entry name" value="RIBOSOMALL20"/>
</dbReference>
<dbReference type="SUPFAM" id="SSF74731">
    <property type="entry name" value="Ribosomal protein L20"/>
    <property type="match status" value="1"/>
</dbReference>
<dbReference type="PROSITE" id="PS00937">
    <property type="entry name" value="RIBOSOMAL_L20"/>
    <property type="match status" value="1"/>
</dbReference>
<comment type="function">
    <text evidence="1">Binds directly to 23S ribosomal RNA and is necessary for the in vitro assembly process of the 50S ribosomal subunit. It is not involved in the protein synthesizing functions of that subunit.</text>
</comment>
<comment type="subcellular location">
    <subcellularLocation>
        <location>Plastid</location>
        <location>Chloroplast</location>
    </subcellularLocation>
</comment>
<comment type="similarity">
    <text evidence="1">Belongs to the bacterial ribosomal protein bL20 family.</text>
</comment>
<sequence length="117" mass="14172">MTRIRRGYIARRRRTKIRLFASSFRGAHSRLTRTIIQQKIRALVSAHRDRDRQKRNFRRLWVTRINAVIRESTVSYSYSRLINNLYKRQLLLNRKILAQIAILNRNCLYMISNDILK</sequence>
<reference key="1">
    <citation type="journal article" date="2008" name="Theor. Appl. Genet.">
        <title>The complete nucleotide sequence of the cassava (Manihot esculenta) chloroplast genome and the evolution of atpF in Malpighiales: RNA editing and multiple losses of a group II intron.</title>
        <authorList>
            <person name="Daniell H."/>
            <person name="Wurdack K.J."/>
            <person name="Kanagaraj A."/>
            <person name="Lee S.-B."/>
            <person name="Saski C."/>
            <person name="Jansen R.K."/>
        </authorList>
    </citation>
    <scope>NUCLEOTIDE SEQUENCE [LARGE SCALE GENOMIC DNA]</scope>
    <source>
        <strain>cv. TME3</strain>
    </source>
</reference>